<accession>B0B895</accession>
<accession>O84526</accession>
<accession>P28535</accession>
<keyword id="KW-0687">Ribonucleoprotein</keyword>
<keyword id="KW-0689">Ribosomal protein</keyword>
<keyword id="KW-0694">RNA-binding</keyword>
<keyword id="KW-0699">rRNA-binding</keyword>
<keyword id="KW-0820">tRNA-binding</keyword>
<proteinExistence type="inferred from homology"/>
<name>RL16_CHLT2</name>
<feature type="chain" id="PRO_1000142945" description="Large ribosomal subunit protein uL16">
    <location>
        <begin position="1"/>
        <end position="138"/>
    </location>
</feature>
<reference key="1">
    <citation type="journal article" date="2008" name="Genome Res.">
        <title>Chlamydia trachomatis: genome sequence analysis of lymphogranuloma venereum isolates.</title>
        <authorList>
            <person name="Thomson N.R."/>
            <person name="Holden M.T.G."/>
            <person name="Carder C."/>
            <person name="Lennard N."/>
            <person name="Lockey S.J."/>
            <person name="Marsh P."/>
            <person name="Skipp P."/>
            <person name="O'Connor C.D."/>
            <person name="Goodhead I."/>
            <person name="Norbertzcak H."/>
            <person name="Harris B."/>
            <person name="Ormond D."/>
            <person name="Rance R."/>
            <person name="Quail M.A."/>
            <person name="Parkhill J."/>
            <person name="Stephens R.S."/>
            <person name="Clarke I.N."/>
        </authorList>
    </citation>
    <scope>NUCLEOTIDE SEQUENCE [LARGE SCALE GENOMIC DNA]</scope>
    <source>
        <strain>ATCC VR-902B / DSM 19102 / 434/Bu</strain>
    </source>
</reference>
<reference key="2">
    <citation type="journal article" date="1992" name="J. Bacteriol.">
        <title>Cloning and sequence analysis of the Chlamydia trachomatis spc ribosomal protein gene cluster.</title>
        <authorList>
            <person name="Kaul R."/>
            <person name="Gray G.J."/>
            <person name="Koehncke N.R."/>
            <person name="Gu L.J."/>
        </authorList>
    </citation>
    <scope>NUCLEOTIDE SEQUENCE [GENOMIC DNA] OF 89-138</scope>
</reference>
<dbReference type="EMBL" id="AM884176">
    <property type="protein sequence ID" value="CAP04221.1"/>
    <property type="molecule type" value="Genomic_DNA"/>
</dbReference>
<dbReference type="EMBL" id="M80325">
    <property type="protein sequence ID" value="AAA23169.1"/>
    <property type="molecule type" value="Genomic_DNA"/>
</dbReference>
<dbReference type="PIR" id="G71506">
    <property type="entry name" value="G71506"/>
</dbReference>
<dbReference type="RefSeq" id="WP_009872721.1">
    <property type="nucleotide sequence ID" value="NC_010287.1"/>
</dbReference>
<dbReference type="RefSeq" id="YP_001654854.1">
    <property type="nucleotide sequence ID" value="NC_010287.1"/>
</dbReference>
<dbReference type="SMR" id="B0B895"/>
<dbReference type="GeneID" id="93065360"/>
<dbReference type="KEGG" id="ctb:CTL0783"/>
<dbReference type="PATRIC" id="fig|471472.4.peg.839"/>
<dbReference type="HOGENOM" id="CLU_078858_2_1_0"/>
<dbReference type="PRO" id="PR:B0B895"/>
<dbReference type="Proteomes" id="UP001154402">
    <property type="component" value="Chromosome"/>
</dbReference>
<dbReference type="GO" id="GO:0022625">
    <property type="term" value="C:cytosolic large ribosomal subunit"/>
    <property type="evidence" value="ECO:0007669"/>
    <property type="project" value="TreeGrafter"/>
</dbReference>
<dbReference type="GO" id="GO:0019843">
    <property type="term" value="F:rRNA binding"/>
    <property type="evidence" value="ECO:0007669"/>
    <property type="project" value="UniProtKB-UniRule"/>
</dbReference>
<dbReference type="GO" id="GO:0003735">
    <property type="term" value="F:structural constituent of ribosome"/>
    <property type="evidence" value="ECO:0007669"/>
    <property type="project" value="InterPro"/>
</dbReference>
<dbReference type="GO" id="GO:0000049">
    <property type="term" value="F:tRNA binding"/>
    <property type="evidence" value="ECO:0007669"/>
    <property type="project" value="UniProtKB-KW"/>
</dbReference>
<dbReference type="GO" id="GO:0006412">
    <property type="term" value="P:translation"/>
    <property type="evidence" value="ECO:0007669"/>
    <property type="project" value="UniProtKB-UniRule"/>
</dbReference>
<dbReference type="CDD" id="cd01433">
    <property type="entry name" value="Ribosomal_L16_L10e"/>
    <property type="match status" value="1"/>
</dbReference>
<dbReference type="FunFam" id="3.90.1170.10:FF:000001">
    <property type="entry name" value="50S ribosomal protein L16"/>
    <property type="match status" value="1"/>
</dbReference>
<dbReference type="Gene3D" id="3.90.1170.10">
    <property type="entry name" value="Ribosomal protein L10e/L16"/>
    <property type="match status" value="1"/>
</dbReference>
<dbReference type="HAMAP" id="MF_01342">
    <property type="entry name" value="Ribosomal_uL16"/>
    <property type="match status" value="1"/>
</dbReference>
<dbReference type="InterPro" id="IPR047873">
    <property type="entry name" value="Ribosomal_uL16"/>
</dbReference>
<dbReference type="InterPro" id="IPR000114">
    <property type="entry name" value="Ribosomal_uL16_bact-type"/>
</dbReference>
<dbReference type="InterPro" id="IPR020798">
    <property type="entry name" value="Ribosomal_uL16_CS"/>
</dbReference>
<dbReference type="InterPro" id="IPR016180">
    <property type="entry name" value="Ribosomal_uL16_dom"/>
</dbReference>
<dbReference type="InterPro" id="IPR036920">
    <property type="entry name" value="Ribosomal_uL16_sf"/>
</dbReference>
<dbReference type="NCBIfam" id="TIGR01164">
    <property type="entry name" value="rplP_bact"/>
    <property type="match status" value="1"/>
</dbReference>
<dbReference type="PANTHER" id="PTHR12220">
    <property type="entry name" value="50S/60S RIBOSOMAL PROTEIN L16"/>
    <property type="match status" value="1"/>
</dbReference>
<dbReference type="PANTHER" id="PTHR12220:SF13">
    <property type="entry name" value="LARGE RIBOSOMAL SUBUNIT PROTEIN UL16M"/>
    <property type="match status" value="1"/>
</dbReference>
<dbReference type="Pfam" id="PF00252">
    <property type="entry name" value="Ribosomal_L16"/>
    <property type="match status" value="1"/>
</dbReference>
<dbReference type="PRINTS" id="PR00060">
    <property type="entry name" value="RIBOSOMALL16"/>
</dbReference>
<dbReference type="SUPFAM" id="SSF54686">
    <property type="entry name" value="Ribosomal protein L16p/L10e"/>
    <property type="match status" value="1"/>
</dbReference>
<dbReference type="PROSITE" id="PS00586">
    <property type="entry name" value="RIBOSOMAL_L16_1"/>
    <property type="match status" value="1"/>
</dbReference>
<dbReference type="PROSITE" id="PS00701">
    <property type="entry name" value="RIBOSOMAL_L16_2"/>
    <property type="match status" value="1"/>
</dbReference>
<sequence length="138" mass="15775">MLMPKRTKFRKQQKGQFAGLSKGATFVDFGEFGMQTLERGWITSRQIEACRVAINRYLKRKGKVWIRVFPDKSVTKKPAETRMGKGKGAPDHWVAVVRPGRILFEVANVSKEDAQDALRRAAAKLGIRTRFVKRVERV</sequence>
<comment type="function">
    <text evidence="1">Binds 23S rRNA and is also seen to make contacts with the A and possibly P site tRNAs.</text>
</comment>
<comment type="subunit">
    <text evidence="1">Part of the 50S ribosomal subunit.</text>
</comment>
<comment type="similarity">
    <text evidence="1">Belongs to the universal ribosomal protein uL16 family.</text>
</comment>
<gene>
    <name evidence="1" type="primary">rplP</name>
    <name type="ordered locus">CTL0783</name>
</gene>
<organism>
    <name type="scientific">Chlamydia trachomatis serovar L2 (strain ATCC VR-902B / DSM 19102 / 434/Bu)</name>
    <dbReference type="NCBI Taxonomy" id="471472"/>
    <lineage>
        <taxon>Bacteria</taxon>
        <taxon>Pseudomonadati</taxon>
        <taxon>Chlamydiota</taxon>
        <taxon>Chlamydiia</taxon>
        <taxon>Chlamydiales</taxon>
        <taxon>Chlamydiaceae</taxon>
        <taxon>Chlamydia/Chlamydophila group</taxon>
        <taxon>Chlamydia</taxon>
    </lineage>
</organism>
<protein>
    <recommendedName>
        <fullName evidence="1">Large ribosomal subunit protein uL16</fullName>
    </recommendedName>
    <alternativeName>
        <fullName evidence="2">50S ribosomal protein L16</fullName>
    </alternativeName>
</protein>
<evidence type="ECO:0000255" key="1">
    <source>
        <dbReference type="HAMAP-Rule" id="MF_01342"/>
    </source>
</evidence>
<evidence type="ECO:0000305" key="2"/>